<gene>
    <name evidence="1" type="primary">proA</name>
    <name type="ordered locus">SPG_0859</name>
</gene>
<protein>
    <recommendedName>
        <fullName evidence="1">Gamma-glutamyl phosphate reductase</fullName>
        <shortName evidence="1">GPR</shortName>
        <ecNumber evidence="1">1.2.1.41</ecNumber>
    </recommendedName>
    <alternativeName>
        <fullName evidence="1">Glutamate-5-semialdehyde dehydrogenase</fullName>
    </alternativeName>
    <alternativeName>
        <fullName evidence="1">Glutamyl-gamma-semialdehyde dehydrogenase</fullName>
        <shortName evidence="1">GSA dehydrogenase</shortName>
    </alternativeName>
</protein>
<accession>B5E435</accession>
<organism>
    <name type="scientific">Streptococcus pneumoniae serotype 19F (strain G54)</name>
    <dbReference type="NCBI Taxonomy" id="512566"/>
    <lineage>
        <taxon>Bacteria</taxon>
        <taxon>Bacillati</taxon>
        <taxon>Bacillota</taxon>
        <taxon>Bacilli</taxon>
        <taxon>Lactobacillales</taxon>
        <taxon>Streptococcaceae</taxon>
        <taxon>Streptococcus</taxon>
    </lineage>
</organism>
<reference key="1">
    <citation type="journal article" date="2001" name="Microb. Drug Resist.">
        <title>Annotated draft genomic sequence from a Streptococcus pneumoniae type 19F clinical isolate.</title>
        <authorList>
            <person name="Dopazo J."/>
            <person name="Mendoza A."/>
            <person name="Herrero J."/>
            <person name="Caldara F."/>
            <person name="Humbert Y."/>
            <person name="Friedli L."/>
            <person name="Guerrier M."/>
            <person name="Grand-Schenk E."/>
            <person name="Gandin C."/>
            <person name="de Francesco M."/>
            <person name="Polissi A."/>
            <person name="Buell G."/>
            <person name="Feger G."/>
            <person name="Garcia E."/>
            <person name="Peitsch M."/>
            <person name="Garcia-Bustos J.F."/>
        </authorList>
    </citation>
    <scope>NUCLEOTIDE SEQUENCE [LARGE SCALE GENOMIC DNA]</scope>
    <source>
        <strain>G54</strain>
    </source>
</reference>
<reference key="2">
    <citation type="submission" date="2008-03" db="EMBL/GenBank/DDBJ databases">
        <title>Pneumococcal beta glucoside metabolism investigated by whole genome comparison.</title>
        <authorList>
            <person name="Mulas L."/>
            <person name="Trappetti C."/>
            <person name="Hakenbeck R."/>
            <person name="Iannelli F."/>
            <person name="Pozzi G."/>
            <person name="Davidsen T.M."/>
            <person name="Tettelin H."/>
            <person name="Oggioni M."/>
        </authorList>
    </citation>
    <scope>NUCLEOTIDE SEQUENCE [LARGE SCALE GENOMIC DNA]</scope>
    <source>
        <strain>G54</strain>
    </source>
</reference>
<proteinExistence type="inferred from homology"/>
<feature type="chain" id="PRO_1000193663" description="Gamma-glutamyl phosphate reductase">
    <location>
        <begin position="1"/>
        <end position="420"/>
    </location>
</feature>
<sequence length="420" mass="45313">MVSRQEQFEQVQAVKKSINTASEEVKNQVLLAMADHLVAATEEILAANALDMAAAKGKISDVMLDRLYLDADRIEAMARGIREVVALPDPIGEVLETSQLENGLVITKKRVAMGVIGIIYESRPNVTSDAAALTLKSGNAVVLRSGKDAYQTTHAIVTALKKGLETTTIHPNVIQLVEDTSRESSYAMMKAKGYLDLLIPRGGADLINAVVENAIVPVIETGTGIVHVYVDKDADDDKALSIINNAKTSRPSVCNAMEVLLVHEDKAASFLPRLEQVLVADRKEAGLEPIQFRLDSKASQFVSGQAAQAQDFDTEFLDYILAVKVVSSLEEAVAHIESHSTHHSDAIVTENAEAAAYFTDQVDSAAVYVNASTRFTDGGQFGLGCEMGISTQKLHARGPMGLKELTSYKYVVTGDGQIRE</sequence>
<evidence type="ECO:0000255" key="1">
    <source>
        <dbReference type="HAMAP-Rule" id="MF_00412"/>
    </source>
</evidence>
<comment type="function">
    <text evidence="1">Catalyzes the NADPH-dependent reduction of L-glutamate 5-phosphate into L-glutamate 5-semialdehyde and phosphate. The product spontaneously undergoes cyclization to form 1-pyrroline-5-carboxylate.</text>
</comment>
<comment type="catalytic activity">
    <reaction evidence="1">
        <text>L-glutamate 5-semialdehyde + phosphate + NADP(+) = L-glutamyl 5-phosphate + NADPH + H(+)</text>
        <dbReference type="Rhea" id="RHEA:19541"/>
        <dbReference type="ChEBI" id="CHEBI:15378"/>
        <dbReference type="ChEBI" id="CHEBI:43474"/>
        <dbReference type="ChEBI" id="CHEBI:57783"/>
        <dbReference type="ChEBI" id="CHEBI:58066"/>
        <dbReference type="ChEBI" id="CHEBI:58274"/>
        <dbReference type="ChEBI" id="CHEBI:58349"/>
        <dbReference type="EC" id="1.2.1.41"/>
    </reaction>
</comment>
<comment type="pathway">
    <text evidence="1">Amino-acid biosynthesis; L-proline biosynthesis; L-glutamate 5-semialdehyde from L-glutamate: step 2/2.</text>
</comment>
<comment type="subcellular location">
    <subcellularLocation>
        <location evidence="1">Cytoplasm</location>
    </subcellularLocation>
</comment>
<comment type="similarity">
    <text evidence="1">Belongs to the gamma-glutamyl phosphate reductase family.</text>
</comment>
<name>PROA_STRP4</name>
<dbReference type="EC" id="1.2.1.41" evidence="1"/>
<dbReference type="EMBL" id="CP001015">
    <property type="protein sequence ID" value="ACF56553.1"/>
    <property type="molecule type" value="Genomic_DNA"/>
</dbReference>
<dbReference type="SMR" id="B5E435"/>
<dbReference type="KEGG" id="spx:SPG_0859"/>
<dbReference type="HOGENOM" id="CLU_030231_0_0_9"/>
<dbReference type="UniPathway" id="UPA00098">
    <property type="reaction ID" value="UER00360"/>
</dbReference>
<dbReference type="GO" id="GO:0005737">
    <property type="term" value="C:cytoplasm"/>
    <property type="evidence" value="ECO:0007669"/>
    <property type="project" value="UniProtKB-SubCell"/>
</dbReference>
<dbReference type="GO" id="GO:0004350">
    <property type="term" value="F:glutamate-5-semialdehyde dehydrogenase activity"/>
    <property type="evidence" value="ECO:0007669"/>
    <property type="project" value="UniProtKB-UniRule"/>
</dbReference>
<dbReference type="GO" id="GO:0050661">
    <property type="term" value="F:NADP binding"/>
    <property type="evidence" value="ECO:0007669"/>
    <property type="project" value="InterPro"/>
</dbReference>
<dbReference type="GO" id="GO:0055129">
    <property type="term" value="P:L-proline biosynthetic process"/>
    <property type="evidence" value="ECO:0007669"/>
    <property type="project" value="UniProtKB-UniRule"/>
</dbReference>
<dbReference type="CDD" id="cd07079">
    <property type="entry name" value="ALDH_F18-19_ProA-GPR"/>
    <property type="match status" value="1"/>
</dbReference>
<dbReference type="FunFam" id="3.40.309.10:FF:000006">
    <property type="entry name" value="Gamma-glutamyl phosphate reductase"/>
    <property type="match status" value="1"/>
</dbReference>
<dbReference type="Gene3D" id="3.40.605.10">
    <property type="entry name" value="Aldehyde Dehydrogenase, Chain A, domain 1"/>
    <property type="match status" value="1"/>
</dbReference>
<dbReference type="Gene3D" id="3.40.309.10">
    <property type="entry name" value="Aldehyde Dehydrogenase, Chain A, domain 2"/>
    <property type="match status" value="1"/>
</dbReference>
<dbReference type="HAMAP" id="MF_00412">
    <property type="entry name" value="ProA"/>
    <property type="match status" value="1"/>
</dbReference>
<dbReference type="InterPro" id="IPR016161">
    <property type="entry name" value="Ald_DH/histidinol_DH"/>
</dbReference>
<dbReference type="InterPro" id="IPR016163">
    <property type="entry name" value="Ald_DH_C"/>
</dbReference>
<dbReference type="InterPro" id="IPR016162">
    <property type="entry name" value="Ald_DH_N"/>
</dbReference>
<dbReference type="InterPro" id="IPR015590">
    <property type="entry name" value="Aldehyde_DH_dom"/>
</dbReference>
<dbReference type="InterPro" id="IPR020593">
    <property type="entry name" value="G-glutamylP_reductase_CS"/>
</dbReference>
<dbReference type="InterPro" id="IPR012134">
    <property type="entry name" value="Glu-5-SA_DH"/>
</dbReference>
<dbReference type="InterPro" id="IPR000965">
    <property type="entry name" value="GPR_dom"/>
</dbReference>
<dbReference type="NCBIfam" id="NF001221">
    <property type="entry name" value="PRK00197.1"/>
    <property type="match status" value="1"/>
</dbReference>
<dbReference type="NCBIfam" id="TIGR00407">
    <property type="entry name" value="proA"/>
    <property type="match status" value="1"/>
</dbReference>
<dbReference type="PANTHER" id="PTHR11063:SF8">
    <property type="entry name" value="DELTA-1-PYRROLINE-5-CARBOXYLATE SYNTHASE"/>
    <property type="match status" value="1"/>
</dbReference>
<dbReference type="PANTHER" id="PTHR11063">
    <property type="entry name" value="GLUTAMATE SEMIALDEHYDE DEHYDROGENASE"/>
    <property type="match status" value="1"/>
</dbReference>
<dbReference type="Pfam" id="PF00171">
    <property type="entry name" value="Aldedh"/>
    <property type="match status" value="1"/>
</dbReference>
<dbReference type="PIRSF" id="PIRSF000151">
    <property type="entry name" value="GPR"/>
    <property type="match status" value="1"/>
</dbReference>
<dbReference type="SUPFAM" id="SSF53720">
    <property type="entry name" value="ALDH-like"/>
    <property type="match status" value="1"/>
</dbReference>
<dbReference type="PROSITE" id="PS01223">
    <property type="entry name" value="PROA"/>
    <property type="match status" value="1"/>
</dbReference>
<keyword id="KW-0028">Amino-acid biosynthesis</keyword>
<keyword id="KW-0963">Cytoplasm</keyword>
<keyword id="KW-0521">NADP</keyword>
<keyword id="KW-0560">Oxidoreductase</keyword>
<keyword id="KW-0641">Proline biosynthesis</keyword>